<accession>Q9VYA8</accession>
<accession>C6SV10</accession>
<accession>Q8T0H6</accession>
<proteinExistence type="evidence at transcript level"/>
<dbReference type="EMBL" id="AE014298">
    <property type="protein sequence ID" value="AAF48295.2"/>
    <property type="molecule type" value="Genomic_DNA"/>
</dbReference>
<dbReference type="EMBL" id="AY069312">
    <property type="protein sequence ID" value="AAL39457.1"/>
    <property type="molecule type" value="mRNA"/>
</dbReference>
<dbReference type="EMBL" id="BT089002">
    <property type="protein sequence ID" value="ACT88143.1"/>
    <property type="molecule type" value="mRNA"/>
</dbReference>
<dbReference type="RefSeq" id="NP_001245654.1">
    <molecule id="Q9VYA8-2"/>
    <property type="nucleotide sequence ID" value="NM_001258725.2"/>
</dbReference>
<dbReference type="RefSeq" id="NP_001259525.1">
    <molecule id="Q9VYA8-1"/>
    <property type="nucleotide sequence ID" value="NM_001272596.1"/>
</dbReference>
<dbReference type="RefSeq" id="NP_001285217.1">
    <molecule id="Q9VYA8-2"/>
    <property type="nucleotide sequence ID" value="NM_001298288.1"/>
</dbReference>
<dbReference type="RefSeq" id="NP_572905.1">
    <molecule id="Q9VYA8-1"/>
    <property type="nucleotide sequence ID" value="NM_132677.4"/>
</dbReference>
<dbReference type="SMR" id="Q9VYA8"/>
<dbReference type="BioGRID" id="58696">
    <property type="interactions" value="26"/>
</dbReference>
<dbReference type="FunCoup" id="Q9VYA8">
    <property type="interactions" value="720"/>
</dbReference>
<dbReference type="IntAct" id="Q9VYA8">
    <property type="interactions" value="7"/>
</dbReference>
<dbReference type="STRING" id="7227.FBpp0309341"/>
<dbReference type="DNASU" id="32319"/>
<dbReference type="EnsemblMetazoa" id="FBtr0073807">
    <molecule id="Q9VYA8-1"/>
    <property type="protein sequence ID" value="FBpp0073638"/>
    <property type="gene ID" value="FBgn0030503"/>
</dbReference>
<dbReference type="EnsemblMetazoa" id="FBtr0308644">
    <molecule id="Q9VYA8-2"/>
    <property type="protein sequence ID" value="FBpp0300867"/>
    <property type="gene ID" value="FBgn0030503"/>
</dbReference>
<dbReference type="EnsemblMetazoa" id="FBtr0331722">
    <molecule id="Q9VYA8-1"/>
    <property type="protein sequence ID" value="FBpp0304111"/>
    <property type="gene ID" value="FBgn0030503"/>
</dbReference>
<dbReference type="EnsemblMetazoa" id="FBtr0340395">
    <molecule id="Q9VYA8-2"/>
    <property type="protein sequence ID" value="FBpp0309341"/>
    <property type="gene ID" value="FBgn0030503"/>
</dbReference>
<dbReference type="GeneID" id="32319"/>
<dbReference type="KEGG" id="dme:Dmel_CG11176"/>
<dbReference type="UCSC" id="CG11176-RA">
    <molecule id="Q9VYA8-1"/>
    <property type="organism name" value="d. melanogaster"/>
</dbReference>
<dbReference type="AGR" id="FB:FBgn0030503"/>
<dbReference type="CTD" id="128989"/>
<dbReference type="FlyBase" id="FBgn0030503">
    <property type="gene designation" value="Tango2"/>
</dbReference>
<dbReference type="VEuPathDB" id="VectorBase:FBgn0030503"/>
<dbReference type="GeneTree" id="ENSGT00390000012733"/>
<dbReference type="HOGENOM" id="CLU_047037_3_2_1"/>
<dbReference type="InParanoid" id="Q9VYA8"/>
<dbReference type="OMA" id="FAWRPGH"/>
<dbReference type="OrthoDB" id="191601at2759"/>
<dbReference type="PhylomeDB" id="Q9VYA8"/>
<dbReference type="BioGRID-ORCS" id="32319">
    <property type="hits" value="0 hits in 1 CRISPR screen"/>
</dbReference>
<dbReference type="GenomeRNAi" id="32319"/>
<dbReference type="PRO" id="PR:Q9VYA8"/>
<dbReference type="Proteomes" id="UP000000803">
    <property type="component" value="Chromosome X"/>
</dbReference>
<dbReference type="Bgee" id="FBgn0030503">
    <property type="expression patterns" value="Expressed in adult Malpighian tubule principal cell of lower segment in Malpighian tubule and 76 other cell types or tissues"/>
</dbReference>
<dbReference type="ExpressionAtlas" id="Q9VYA8">
    <property type="expression patterns" value="baseline and differential"/>
</dbReference>
<dbReference type="GO" id="GO:0005829">
    <property type="term" value="C:cytosol"/>
    <property type="evidence" value="ECO:0000314"/>
    <property type="project" value="FlyBase"/>
</dbReference>
<dbReference type="GO" id="GO:0005794">
    <property type="term" value="C:Golgi apparatus"/>
    <property type="evidence" value="ECO:0000314"/>
    <property type="project" value="FlyBase"/>
</dbReference>
<dbReference type="GO" id="GO:0005739">
    <property type="term" value="C:mitochondrion"/>
    <property type="evidence" value="ECO:0000250"/>
    <property type="project" value="UniProtKB"/>
</dbReference>
<dbReference type="GO" id="GO:0007030">
    <property type="term" value="P:Golgi organization"/>
    <property type="evidence" value="ECO:0000315"/>
    <property type="project" value="FlyBase"/>
</dbReference>
<dbReference type="GO" id="GO:0009306">
    <property type="term" value="P:protein secretion"/>
    <property type="evidence" value="ECO:0000315"/>
    <property type="project" value="FlyBase"/>
</dbReference>
<dbReference type="InterPro" id="IPR008551">
    <property type="entry name" value="TANGO2"/>
</dbReference>
<dbReference type="PANTHER" id="PTHR17985">
    <property type="entry name" value="SER/THR-RICH PROTEIN T10 IN DGCR REGION"/>
    <property type="match status" value="1"/>
</dbReference>
<dbReference type="PANTHER" id="PTHR17985:SF8">
    <property type="entry name" value="TRANSPORT AND GOLGI ORGANIZATION PROTEIN 2 HOMOLOG"/>
    <property type="match status" value="1"/>
</dbReference>
<dbReference type="Pfam" id="PF05742">
    <property type="entry name" value="TANGO2"/>
    <property type="match status" value="1"/>
</dbReference>
<sequence>MCVIFFCADSNPQPGGYKLILASNRDEFFARATLSAAKWANADHVYGGIDLEPGREGGTWLAIGHSAGFFKVGALLNLTGEPKPRDAVGRGMIVADYVTRADEEHSILNYNERLLKDCTKYSAFNFVSIEIGSASQPARVKLLSNVPPTLEDFQNGECYGFGNSLPHSPFEKVRHGKQEFEAIVKAHGEASVETLSAQLMQLLRNKHKFWPDDELKTRAPNWGEGLSSLNVHIEEHAYGSRTHSVVLVDSENKMHFIEETMTGLDPHGEWNKTHIEKDFQNGV</sequence>
<evidence type="ECO:0000250" key="1">
    <source>
        <dbReference type="UniProtKB" id="P54797"/>
    </source>
</evidence>
<evidence type="ECO:0000269" key="2">
    <source>
    </source>
</evidence>
<evidence type="ECO:0000305" key="3"/>
<name>TNG2_DROME</name>
<keyword id="KW-0025">Alternative splicing</keyword>
<keyword id="KW-0963">Cytoplasm</keyword>
<keyword id="KW-0333">Golgi apparatus</keyword>
<keyword id="KW-0496">Mitochondrion</keyword>
<keyword id="KW-1185">Reference proteome</keyword>
<comment type="function">
    <text evidence="2">May play a role in Golgi organization.</text>
</comment>
<comment type="subcellular location">
    <subcellularLocation>
        <location evidence="2">Cytoplasm</location>
    </subcellularLocation>
    <subcellularLocation>
        <location evidence="1">Mitochondrion</location>
    </subcellularLocation>
    <subcellularLocation>
        <location evidence="2">Golgi apparatus</location>
    </subcellularLocation>
</comment>
<comment type="alternative products">
    <event type="alternative splicing"/>
    <isoform>
        <id>Q9VYA8-1</id>
        <name>1</name>
        <sequence type="displayed"/>
    </isoform>
    <isoform>
        <id>Q9VYA8-2</id>
        <name>2</name>
        <sequence type="described" ref="VSP_045448"/>
    </isoform>
</comment>
<comment type="similarity">
    <text evidence="3">Belongs to the Tango2 family.</text>
</comment>
<organism>
    <name type="scientific">Drosophila melanogaster</name>
    <name type="common">Fruit fly</name>
    <dbReference type="NCBI Taxonomy" id="7227"/>
    <lineage>
        <taxon>Eukaryota</taxon>
        <taxon>Metazoa</taxon>
        <taxon>Ecdysozoa</taxon>
        <taxon>Arthropoda</taxon>
        <taxon>Hexapoda</taxon>
        <taxon>Insecta</taxon>
        <taxon>Pterygota</taxon>
        <taxon>Neoptera</taxon>
        <taxon>Endopterygota</taxon>
        <taxon>Diptera</taxon>
        <taxon>Brachycera</taxon>
        <taxon>Muscomorpha</taxon>
        <taxon>Ephydroidea</taxon>
        <taxon>Drosophilidae</taxon>
        <taxon>Drosophila</taxon>
        <taxon>Sophophora</taxon>
    </lineage>
</organism>
<reference key="1">
    <citation type="journal article" date="2000" name="Science">
        <title>The genome sequence of Drosophila melanogaster.</title>
        <authorList>
            <person name="Adams M.D."/>
            <person name="Celniker S.E."/>
            <person name="Holt R.A."/>
            <person name="Evans C.A."/>
            <person name="Gocayne J.D."/>
            <person name="Amanatides P.G."/>
            <person name="Scherer S.E."/>
            <person name="Li P.W."/>
            <person name="Hoskins R.A."/>
            <person name="Galle R.F."/>
            <person name="George R.A."/>
            <person name="Lewis S.E."/>
            <person name="Richards S."/>
            <person name="Ashburner M."/>
            <person name="Henderson S.N."/>
            <person name="Sutton G.G."/>
            <person name="Wortman J.R."/>
            <person name="Yandell M.D."/>
            <person name="Zhang Q."/>
            <person name="Chen L.X."/>
            <person name="Brandon R.C."/>
            <person name="Rogers Y.-H.C."/>
            <person name="Blazej R.G."/>
            <person name="Champe M."/>
            <person name="Pfeiffer B.D."/>
            <person name="Wan K.H."/>
            <person name="Doyle C."/>
            <person name="Baxter E.G."/>
            <person name="Helt G."/>
            <person name="Nelson C.R."/>
            <person name="Miklos G.L.G."/>
            <person name="Abril J.F."/>
            <person name="Agbayani A."/>
            <person name="An H.-J."/>
            <person name="Andrews-Pfannkoch C."/>
            <person name="Baldwin D."/>
            <person name="Ballew R.M."/>
            <person name="Basu A."/>
            <person name="Baxendale J."/>
            <person name="Bayraktaroglu L."/>
            <person name="Beasley E.M."/>
            <person name="Beeson K.Y."/>
            <person name="Benos P.V."/>
            <person name="Berman B.P."/>
            <person name="Bhandari D."/>
            <person name="Bolshakov S."/>
            <person name="Borkova D."/>
            <person name="Botchan M.R."/>
            <person name="Bouck J."/>
            <person name="Brokstein P."/>
            <person name="Brottier P."/>
            <person name="Burtis K.C."/>
            <person name="Busam D.A."/>
            <person name="Butler H."/>
            <person name="Cadieu E."/>
            <person name="Center A."/>
            <person name="Chandra I."/>
            <person name="Cherry J.M."/>
            <person name="Cawley S."/>
            <person name="Dahlke C."/>
            <person name="Davenport L.B."/>
            <person name="Davies P."/>
            <person name="de Pablos B."/>
            <person name="Delcher A."/>
            <person name="Deng Z."/>
            <person name="Mays A.D."/>
            <person name="Dew I."/>
            <person name="Dietz S.M."/>
            <person name="Dodson K."/>
            <person name="Doup L.E."/>
            <person name="Downes M."/>
            <person name="Dugan-Rocha S."/>
            <person name="Dunkov B.C."/>
            <person name="Dunn P."/>
            <person name="Durbin K.J."/>
            <person name="Evangelista C.C."/>
            <person name="Ferraz C."/>
            <person name="Ferriera S."/>
            <person name="Fleischmann W."/>
            <person name="Fosler C."/>
            <person name="Gabrielian A.E."/>
            <person name="Garg N.S."/>
            <person name="Gelbart W.M."/>
            <person name="Glasser K."/>
            <person name="Glodek A."/>
            <person name="Gong F."/>
            <person name="Gorrell J.H."/>
            <person name="Gu Z."/>
            <person name="Guan P."/>
            <person name="Harris M."/>
            <person name="Harris N.L."/>
            <person name="Harvey D.A."/>
            <person name="Heiman T.J."/>
            <person name="Hernandez J.R."/>
            <person name="Houck J."/>
            <person name="Hostin D."/>
            <person name="Houston K.A."/>
            <person name="Howland T.J."/>
            <person name="Wei M.-H."/>
            <person name="Ibegwam C."/>
            <person name="Jalali M."/>
            <person name="Kalush F."/>
            <person name="Karpen G.H."/>
            <person name="Ke Z."/>
            <person name="Kennison J.A."/>
            <person name="Ketchum K.A."/>
            <person name="Kimmel B.E."/>
            <person name="Kodira C.D."/>
            <person name="Kraft C.L."/>
            <person name="Kravitz S."/>
            <person name="Kulp D."/>
            <person name="Lai Z."/>
            <person name="Lasko P."/>
            <person name="Lei Y."/>
            <person name="Levitsky A.A."/>
            <person name="Li J.H."/>
            <person name="Li Z."/>
            <person name="Liang Y."/>
            <person name="Lin X."/>
            <person name="Liu X."/>
            <person name="Mattei B."/>
            <person name="McIntosh T.C."/>
            <person name="McLeod M.P."/>
            <person name="McPherson D."/>
            <person name="Merkulov G."/>
            <person name="Milshina N.V."/>
            <person name="Mobarry C."/>
            <person name="Morris J."/>
            <person name="Moshrefi A."/>
            <person name="Mount S.M."/>
            <person name="Moy M."/>
            <person name="Murphy B."/>
            <person name="Murphy L."/>
            <person name="Muzny D.M."/>
            <person name="Nelson D.L."/>
            <person name="Nelson D.R."/>
            <person name="Nelson K.A."/>
            <person name="Nixon K."/>
            <person name="Nusskern D.R."/>
            <person name="Pacleb J.M."/>
            <person name="Palazzolo M."/>
            <person name="Pittman G.S."/>
            <person name="Pan S."/>
            <person name="Pollard J."/>
            <person name="Puri V."/>
            <person name="Reese M.G."/>
            <person name="Reinert K."/>
            <person name="Remington K."/>
            <person name="Saunders R.D.C."/>
            <person name="Scheeler F."/>
            <person name="Shen H."/>
            <person name="Shue B.C."/>
            <person name="Siden-Kiamos I."/>
            <person name="Simpson M."/>
            <person name="Skupski M.P."/>
            <person name="Smith T.J."/>
            <person name="Spier E."/>
            <person name="Spradling A.C."/>
            <person name="Stapleton M."/>
            <person name="Strong R."/>
            <person name="Sun E."/>
            <person name="Svirskas R."/>
            <person name="Tector C."/>
            <person name="Turner R."/>
            <person name="Venter E."/>
            <person name="Wang A.H."/>
            <person name="Wang X."/>
            <person name="Wang Z.-Y."/>
            <person name="Wassarman D.A."/>
            <person name="Weinstock G.M."/>
            <person name="Weissenbach J."/>
            <person name="Williams S.M."/>
            <person name="Woodage T."/>
            <person name="Worley K.C."/>
            <person name="Wu D."/>
            <person name="Yang S."/>
            <person name="Yao Q.A."/>
            <person name="Ye J."/>
            <person name="Yeh R.-F."/>
            <person name="Zaveri J.S."/>
            <person name="Zhan M."/>
            <person name="Zhang G."/>
            <person name="Zhao Q."/>
            <person name="Zheng L."/>
            <person name="Zheng X.H."/>
            <person name="Zhong F.N."/>
            <person name="Zhong W."/>
            <person name="Zhou X."/>
            <person name="Zhu S.C."/>
            <person name="Zhu X."/>
            <person name="Smith H.O."/>
            <person name="Gibbs R.A."/>
            <person name="Myers E.W."/>
            <person name="Rubin G.M."/>
            <person name="Venter J.C."/>
        </authorList>
    </citation>
    <scope>NUCLEOTIDE SEQUENCE [LARGE SCALE GENOMIC DNA]</scope>
    <source>
        <strain>Berkeley</strain>
    </source>
</reference>
<reference key="2">
    <citation type="journal article" date="2002" name="Genome Biol.">
        <title>Annotation of the Drosophila melanogaster euchromatic genome: a systematic review.</title>
        <authorList>
            <person name="Misra S."/>
            <person name="Crosby M.A."/>
            <person name="Mungall C.J."/>
            <person name="Matthews B.B."/>
            <person name="Campbell K.S."/>
            <person name="Hradecky P."/>
            <person name="Huang Y."/>
            <person name="Kaminker J.S."/>
            <person name="Millburn G.H."/>
            <person name="Prochnik S.E."/>
            <person name="Smith C.D."/>
            <person name="Tupy J.L."/>
            <person name="Whitfield E.J."/>
            <person name="Bayraktaroglu L."/>
            <person name="Berman B.P."/>
            <person name="Bettencourt B.R."/>
            <person name="Celniker S.E."/>
            <person name="de Grey A.D.N.J."/>
            <person name="Drysdale R.A."/>
            <person name="Harris N.L."/>
            <person name="Richter J."/>
            <person name="Russo S."/>
            <person name="Schroeder A.J."/>
            <person name="Shu S.Q."/>
            <person name="Stapleton M."/>
            <person name="Yamada C."/>
            <person name="Ashburner M."/>
            <person name="Gelbart W.M."/>
            <person name="Rubin G.M."/>
            <person name="Lewis S.E."/>
        </authorList>
    </citation>
    <scope>GENOME REANNOTATION</scope>
    <source>
        <strain>Berkeley</strain>
    </source>
</reference>
<reference key="3">
    <citation type="journal article" date="2002" name="Genome Biol.">
        <title>A Drosophila full-length cDNA resource.</title>
        <authorList>
            <person name="Stapleton M."/>
            <person name="Carlson J.W."/>
            <person name="Brokstein P."/>
            <person name="Yu C."/>
            <person name="Champe M."/>
            <person name="George R.A."/>
            <person name="Guarin H."/>
            <person name="Kronmiller B."/>
            <person name="Pacleb J.M."/>
            <person name="Park S."/>
            <person name="Wan K.H."/>
            <person name="Rubin G.M."/>
            <person name="Celniker S.E."/>
        </authorList>
    </citation>
    <scope>NUCLEOTIDE SEQUENCE [LARGE SCALE MRNA] (ISOFORM 1)</scope>
    <source>
        <strain>Berkeley</strain>
        <tissue>Embryo</tissue>
    </source>
</reference>
<reference key="4">
    <citation type="submission" date="2009-07" db="EMBL/GenBank/DDBJ databases">
        <authorList>
            <person name="Carlson J."/>
            <person name="Booth B."/>
            <person name="Frise E."/>
            <person name="Park S."/>
            <person name="Wan K."/>
            <person name="Yu C."/>
            <person name="Celniker S."/>
        </authorList>
    </citation>
    <scope>NUCLEOTIDE SEQUENCE [LARGE SCALE MRNA] (ISOFORM 1)</scope>
    <source>
        <strain>Berkeley</strain>
    </source>
</reference>
<reference key="5">
    <citation type="journal article" date="2006" name="Nature">
        <title>Functional genomics reveals genes involved in protein secretion and Golgi organization.</title>
        <authorList>
            <person name="Bard F."/>
            <person name="Casano L."/>
            <person name="Mallabiabarrena A."/>
            <person name="Wallace E."/>
            <person name="Saito K."/>
            <person name="Kitayama H."/>
            <person name="Guizzunti G."/>
            <person name="Hu Y."/>
            <person name="Wendler F."/>
            <person name="Dasgupta R."/>
            <person name="Perrimon N."/>
            <person name="Malhotra V."/>
        </authorList>
    </citation>
    <scope>FUNCTION</scope>
    <scope>SUBCELLULAR LOCATION</scope>
</reference>
<feature type="chain" id="PRO_0000421289" description="Transport and Golgi organization protein 2">
    <location>
        <begin position="1"/>
        <end position="283"/>
    </location>
</feature>
<feature type="splice variant" id="VSP_045448" description="In isoform 2." evidence="3">
    <original>V</original>
    <variation>VAHKNILQPHNHNSNSTGINLCPKTTTSNSYRHPNPNPIQNPNTNPSRGQSNNEHFLL</variation>
    <location>
        <position position="88"/>
    </location>
</feature>
<gene>
    <name type="primary">Tango2</name>
    <name type="ORF">CG11176</name>
</gene>
<protein>
    <recommendedName>
        <fullName>Transport and Golgi organization protein 2</fullName>
    </recommendedName>
</protein>